<feature type="chain" id="PRO_0000264055" description="Peptidyl-tRNA hydrolase">
    <location>
        <begin position="1"/>
        <end position="200"/>
    </location>
</feature>
<feature type="active site" description="Proton acceptor" evidence="1">
    <location>
        <position position="19"/>
    </location>
</feature>
<feature type="binding site" evidence="1">
    <location>
        <position position="14"/>
    </location>
    <ligand>
        <name>tRNA</name>
        <dbReference type="ChEBI" id="CHEBI:17843"/>
    </ligand>
</feature>
<feature type="binding site" evidence="1">
    <location>
        <position position="64"/>
    </location>
    <ligand>
        <name>tRNA</name>
        <dbReference type="ChEBI" id="CHEBI:17843"/>
    </ligand>
</feature>
<feature type="binding site" evidence="1">
    <location>
        <position position="66"/>
    </location>
    <ligand>
        <name>tRNA</name>
        <dbReference type="ChEBI" id="CHEBI:17843"/>
    </ligand>
</feature>
<feature type="binding site" evidence="1">
    <location>
        <position position="112"/>
    </location>
    <ligand>
        <name>tRNA</name>
        <dbReference type="ChEBI" id="CHEBI:17843"/>
    </ligand>
</feature>
<feature type="site" description="Discriminates between blocked and unblocked aminoacyl-tRNA" evidence="1">
    <location>
        <position position="9"/>
    </location>
</feature>
<feature type="site" description="Stabilizes the basic form of H active site to accept a proton" evidence="1">
    <location>
        <position position="91"/>
    </location>
</feature>
<accession>Q0ARN8</accession>
<comment type="function">
    <text evidence="1">Hydrolyzes ribosome-free peptidyl-tRNAs (with 1 or more amino acids incorporated), which drop off the ribosome during protein synthesis, or as a result of ribosome stalling.</text>
</comment>
<comment type="function">
    <text evidence="1">Catalyzes the release of premature peptidyl moieties from peptidyl-tRNA molecules trapped in stalled 50S ribosomal subunits, and thus maintains levels of free tRNAs and 50S ribosomes.</text>
</comment>
<comment type="catalytic activity">
    <reaction evidence="1">
        <text>an N-acyl-L-alpha-aminoacyl-tRNA + H2O = an N-acyl-L-amino acid + a tRNA + H(+)</text>
        <dbReference type="Rhea" id="RHEA:54448"/>
        <dbReference type="Rhea" id="RHEA-COMP:10123"/>
        <dbReference type="Rhea" id="RHEA-COMP:13883"/>
        <dbReference type="ChEBI" id="CHEBI:15377"/>
        <dbReference type="ChEBI" id="CHEBI:15378"/>
        <dbReference type="ChEBI" id="CHEBI:59874"/>
        <dbReference type="ChEBI" id="CHEBI:78442"/>
        <dbReference type="ChEBI" id="CHEBI:138191"/>
        <dbReference type="EC" id="3.1.1.29"/>
    </reaction>
</comment>
<comment type="subunit">
    <text evidence="1">Monomer.</text>
</comment>
<comment type="subcellular location">
    <subcellularLocation>
        <location evidence="1">Cytoplasm</location>
    </subcellularLocation>
</comment>
<comment type="similarity">
    <text evidence="1">Belongs to the PTH family.</text>
</comment>
<comment type="sequence caution" evidence="2">
    <conflict type="erroneous initiation">
        <sequence resource="EMBL-CDS" id="ABI65049"/>
    </conflict>
    <text>Extended N-terminus.</text>
</comment>
<sequence>MKILAGLGNYEPKYLRNRHNVGFMALDIIAQAWNAGPWRKRFQGLASEVTIGSNKLLLLKPQTFYNNAGNSVGAAAAFYRVKPEDIIVFHDELDLAPGKFRMKMGGGAAGNNGIKSITSQLGPDFRRARIGIGHPGDRNRVTGYVLSDFAKAEEAWLIDLLDAIAGSLDLLAAGDYDAFQTKVTHKAPAPEVVKRGPDAD</sequence>
<protein>
    <recommendedName>
        <fullName evidence="1">Peptidyl-tRNA hydrolase</fullName>
        <shortName evidence="1">Pth</shortName>
        <ecNumber evidence="1">3.1.1.29</ecNumber>
    </recommendedName>
</protein>
<dbReference type="EC" id="3.1.1.29" evidence="1"/>
<dbReference type="EMBL" id="CP000449">
    <property type="protein sequence ID" value="ABI65049.1"/>
    <property type="status" value="ALT_INIT"/>
    <property type="molecule type" value="Genomic_DNA"/>
</dbReference>
<dbReference type="RefSeq" id="WP_041637257.1">
    <property type="nucleotide sequence ID" value="NC_008347.1"/>
</dbReference>
<dbReference type="SMR" id="Q0ARN8"/>
<dbReference type="STRING" id="394221.Mmar10_0756"/>
<dbReference type="KEGG" id="mmr:Mmar10_0756"/>
<dbReference type="eggNOG" id="COG0193">
    <property type="taxonomic scope" value="Bacteria"/>
</dbReference>
<dbReference type="HOGENOM" id="CLU_062456_1_0_5"/>
<dbReference type="OrthoDB" id="9800507at2"/>
<dbReference type="Proteomes" id="UP000001964">
    <property type="component" value="Chromosome"/>
</dbReference>
<dbReference type="GO" id="GO:0005737">
    <property type="term" value="C:cytoplasm"/>
    <property type="evidence" value="ECO:0007669"/>
    <property type="project" value="UniProtKB-SubCell"/>
</dbReference>
<dbReference type="GO" id="GO:0004045">
    <property type="term" value="F:peptidyl-tRNA hydrolase activity"/>
    <property type="evidence" value="ECO:0007669"/>
    <property type="project" value="UniProtKB-UniRule"/>
</dbReference>
<dbReference type="GO" id="GO:0000049">
    <property type="term" value="F:tRNA binding"/>
    <property type="evidence" value="ECO:0007669"/>
    <property type="project" value="UniProtKB-UniRule"/>
</dbReference>
<dbReference type="GO" id="GO:0006515">
    <property type="term" value="P:protein quality control for misfolded or incompletely synthesized proteins"/>
    <property type="evidence" value="ECO:0007669"/>
    <property type="project" value="UniProtKB-UniRule"/>
</dbReference>
<dbReference type="GO" id="GO:0072344">
    <property type="term" value="P:rescue of stalled ribosome"/>
    <property type="evidence" value="ECO:0007669"/>
    <property type="project" value="UniProtKB-UniRule"/>
</dbReference>
<dbReference type="CDD" id="cd00462">
    <property type="entry name" value="PTH"/>
    <property type="match status" value="1"/>
</dbReference>
<dbReference type="Gene3D" id="3.40.50.1470">
    <property type="entry name" value="Peptidyl-tRNA hydrolase"/>
    <property type="match status" value="1"/>
</dbReference>
<dbReference type="HAMAP" id="MF_00083">
    <property type="entry name" value="Pept_tRNA_hydro_bact"/>
    <property type="match status" value="1"/>
</dbReference>
<dbReference type="InterPro" id="IPR001328">
    <property type="entry name" value="Pept_tRNA_hydro"/>
</dbReference>
<dbReference type="InterPro" id="IPR018171">
    <property type="entry name" value="Pept_tRNA_hydro_CS"/>
</dbReference>
<dbReference type="InterPro" id="IPR036416">
    <property type="entry name" value="Pept_tRNA_hydro_sf"/>
</dbReference>
<dbReference type="NCBIfam" id="TIGR00447">
    <property type="entry name" value="pth"/>
    <property type="match status" value="1"/>
</dbReference>
<dbReference type="PANTHER" id="PTHR17224">
    <property type="entry name" value="PEPTIDYL-TRNA HYDROLASE"/>
    <property type="match status" value="1"/>
</dbReference>
<dbReference type="PANTHER" id="PTHR17224:SF1">
    <property type="entry name" value="PEPTIDYL-TRNA HYDROLASE"/>
    <property type="match status" value="1"/>
</dbReference>
<dbReference type="Pfam" id="PF01195">
    <property type="entry name" value="Pept_tRNA_hydro"/>
    <property type="match status" value="1"/>
</dbReference>
<dbReference type="SUPFAM" id="SSF53178">
    <property type="entry name" value="Peptidyl-tRNA hydrolase-like"/>
    <property type="match status" value="1"/>
</dbReference>
<dbReference type="PROSITE" id="PS01195">
    <property type="entry name" value="PEPT_TRNA_HYDROL_1"/>
    <property type="match status" value="1"/>
</dbReference>
<name>PTH_MARMM</name>
<proteinExistence type="inferred from homology"/>
<evidence type="ECO:0000255" key="1">
    <source>
        <dbReference type="HAMAP-Rule" id="MF_00083"/>
    </source>
</evidence>
<evidence type="ECO:0000305" key="2"/>
<reference key="1">
    <citation type="submission" date="2006-08" db="EMBL/GenBank/DDBJ databases">
        <title>Complete sequence of Maricaulis maris MCS10.</title>
        <authorList>
            <consortium name="US DOE Joint Genome Institute"/>
            <person name="Copeland A."/>
            <person name="Lucas S."/>
            <person name="Lapidus A."/>
            <person name="Barry K."/>
            <person name="Detter J.C."/>
            <person name="Glavina del Rio T."/>
            <person name="Hammon N."/>
            <person name="Israni S."/>
            <person name="Dalin E."/>
            <person name="Tice H."/>
            <person name="Pitluck S."/>
            <person name="Saunders E."/>
            <person name="Brettin T."/>
            <person name="Bruce D."/>
            <person name="Han C."/>
            <person name="Tapia R."/>
            <person name="Gilna P."/>
            <person name="Schmutz J."/>
            <person name="Larimer F."/>
            <person name="Land M."/>
            <person name="Hauser L."/>
            <person name="Kyrpides N."/>
            <person name="Mikhailova N."/>
            <person name="Viollier P."/>
            <person name="Stephens C."/>
            <person name="Richardson P."/>
        </authorList>
    </citation>
    <scope>NUCLEOTIDE SEQUENCE [LARGE SCALE GENOMIC DNA]</scope>
    <source>
        <strain>MCS10</strain>
    </source>
</reference>
<keyword id="KW-0963">Cytoplasm</keyword>
<keyword id="KW-0378">Hydrolase</keyword>
<keyword id="KW-1185">Reference proteome</keyword>
<keyword id="KW-0694">RNA-binding</keyword>
<keyword id="KW-0820">tRNA-binding</keyword>
<organism>
    <name type="scientific">Maricaulis maris (strain MCS10)</name>
    <name type="common">Caulobacter maris</name>
    <dbReference type="NCBI Taxonomy" id="394221"/>
    <lineage>
        <taxon>Bacteria</taxon>
        <taxon>Pseudomonadati</taxon>
        <taxon>Pseudomonadota</taxon>
        <taxon>Alphaproteobacteria</taxon>
        <taxon>Maricaulales</taxon>
        <taxon>Maricaulaceae</taxon>
        <taxon>Maricaulis</taxon>
    </lineage>
</organism>
<gene>
    <name evidence="1" type="primary">pth</name>
    <name type="ordered locus">Mmar10_0756</name>
</gene>